<organism>
    <name type="scientific">Chlamydia trachomatis serovar D (strain ATCC VR-885 / DSM 19411 / UW-3/Cx)</name>
    <dbReference type="NCBI Taxonomy" id="272561"/>
    <lineage>
        <taxon>Bacteria</taxon>
        <taxon>Pseudomonadati</taxon>
        <taxon>Chlamydiota</taxon>
        <taxon>Chlamydiia</taxon>
        <taxon>Chlamydiales</taxon>
        <taxon>Chlamydiaceae</taxon>
        <taxon>Chlamydia/Chlamydophila group</taxon>
        <taxon>Chlamydia</taxon>
    </lineage>
</organism>
<protein>
    <recommendedName>
        <fullName>Uncharacterized RNA methyltransferase CT_742</fullName>
        <ecNumber>2.1.1.-</ecNumber>
    </recommendedName>
    <alternativeName>
        <fullName>Protein HOM1</fullName>
    </alternativeName>
</protein>
<name>Y742_CHLTR</name>
<sequence length="396" mass="44695">MLSCYRNCKHFGVCGGCSSPQMEYASSLKTKELALHNLFAPLIPSQNILPVIPCSPLLRGRNKMEFSFYQTVDGEKTLGFISPSKPKKGIPITECLMIDERAMDILNITRSWWTAHPDLSAYYPPLNKGSLCTITVRVGNISNDFMIILTTSGREEFAVPLNIIQEWQQSLLDSGLPITSIFWEEKLSARNSPTTFRTTHLYGAPFLKQQLSIDGRSSLFHIRPRSFFQPQSLQAEKIIQTIKEFIDPCGEETLLDLYCGAGIIGILLAPYVKKIIGVELVPDAVASAQENIQLNSVDMEVFLEDAKQFCKRNENLPSPDIVVIDPPRCGMQNRALKYLLRMAPKKIVYVSCNPLTQIQECSVLVEQGYQLRRMQPIDQFPHTNHLENIVLLERLS</sequence>
<evidence type="ECO:0000250" key="1"/>
<evidence type="ECO:0000255" key="2">
    <source>
        <dbReference type="PROSITE-ProRule" id="PRU01024"/>
    </source>
</evidence>
<proteinExistence type="inferred from homology"/>
<reference key="1">
    <citation type="journal article" date="1998" name="Science">
        <title>Genome sequence of an obligate intracellular pathogen of humans: Chlamydia trachomatis.</title>
        <authorList>
            <person name="Stephens R.S."/>
            <person name="Kalman S."/>
            <person name="Lammel C.J."/>
            <person name="Fan J."/>
            <person name="Marathe R."/>
            <person name="Aravind L."/>
            <person name="Mitchell W.P."/>
            <person name="Olinger L."/>
            <person name="Tatusov R.L."/>
            <person name="Zhao Q."/>
            <person name="Koonin E.V."/>
            <person name="Davis R.W."/>
        </authorList>
    </citation>
    <scope>NUCLEOTIDE SEQUENCE [LARGE SCALE GENOMIC DNA]</scope>
    <source>
        <strain>ATCC VR-885 / DSM 19411 / UW-3/Cx</strain>
    </source>
</reference>
<reference key="2">
    <citation type="submission" date="1996-03" db="EMBL/GenBank/DDBJ databases">
        <title>Late developmental stage-specific protein in Chlamydia trachomatis resembles eukaryotic homeo-box.</title>
        <authorList>
            <person name="Kilani R.T."/>
            <person name="Kaul R."/>
            <person name="Meuser R.U."/>
            <person name="Tao S."/>
            <person name="Wenman W.M."/>
        </authorList>
    </citation>
    <scope>NUCLEOTIDE SEQUENCE [GENOMIC DNA] OF 64-396</scope>
    <source>
        <strain>L2</strain>
    </source>
</reference>
<gene>
    <name type="ordered locus">CT_742</name>
</gene>
<feature type="chain" id="PRO_0000161967" description="Uncharacterized RNA methyltransferase CT_742">
    <location>
        <begin position="1"/>
        <end position="396"/>
    </location>
</feature>
<feature type="active site" description="Nucleophile" evidence="2">
    <location>
        <position position="352"/>
    </location>
</feature>
<feature type="binding site" evidence="1">
    <location>
        <position position="8"/>
    </location>
    <ligand>
        <name>[4Fe-4S] cluster</name>
        <dbReference type="ChEBI" id="CHEBI:49883"/>
    </ligand>
</feature>
<feature type="binding site" evidence="1">
    <location>
        <position position="14"/>
    </location>
    <ligand>
        <name>[4Fe-4S] cluster</name>
        <dbReference type="ChEBI" id="CHEBI:49883"/>
    </ligand>
</feature>
<feature type="binding site" evidence="1">
    <location>
        <position position="17"/>
    </location>
    <ligand>
        <name>[4Fe-4S] cluster</name>
        <dbReference type="ChEBI" id="CHEBI:49883"/>
    </ligand>
</feature>
<feature type="binding site" evidence="1">
    <location>
        <position position="95"/>
    </location>
    <ligand>
        <name>[4Fe-4S] cluster</name>
        <dbReference type="ChEBI" id="CHEBI:49883"/>
    </ligand>
</feature>
<feature type="binding site" evidence="2">
    <location>
        <position position="229"/>
    </location>
    <ligand>
        <name>S-adenosyl-L-methionine</name>
        <dbReference type="ChEBI" id="CHEBI:59789"/>
    </ligand>
</feature>
<feature type="binding site" evidence="2">
    <location>
        <position position="258"/>
    </location>
    <ligand>
        <name>S-adenosyl-L-methionine</name>
        <dbReference type="ChEBI" id="CHEBI:59789"/>
    </ligand>
</feature>
<feature type="binding site" evidence="2">
    <location>
        <position position="279"/>
    </location>
    <ligand>
        <name>S-adenosyl-L-methionine</name>
        <dbReference type="ChEBI" id="CHEBI:59789"/>
    </ligand>
</feature>
<feature type="binding site" evidence="2">
    <location>
        <position position="325"/>
    </location>
    <ligand>
        <name>S-adenosyl-L-methionine</name>
        <dbReference type="ChEBI" id="CHEBI:59789"/>
    </ligand>
</feature>
<feature type="sequence variant" description="In strain: L2/434/Bu.">
    <original>AGI</original>
    <variation>RGT</variation>
    <location>
        <begin position="261"/>
        <end position="263"/>
    </location>
</feature>
<feature type="sequence variant" description="In strain: L2/434/Bu.">
    <original>R</original>
    <variation>K</variation>
    <location>
        <position position="334"/>
    </location>
</feature>
<feature type="sequence variant" description="In strain: L2/434/Bu.">
    <original>R</original>
    <variation>H</variation>
    <location>
        <position position="373"/>
    </location>
</feature>
<comment type="similarity">
    <text evidence="2">Belongs to the class I-like SAM-binding methyltransferase superfamily. RNA M5U methyltransferase family.</text>
</comment>
<keyword id="KW-0004">4Fe-4S</keyword>
<keyword id="KW-0408">Iron</keyword>
<keyword id="KW-0411">Iron-sulfur</keyword>
<keyword id="KW-0479">Metal-binding</keyword>
<keyword id="KW-0489">Methyltransferase</keyword>
<keyword id="KW-1185">Reference proteome</keyword>
<keyword id="KW-0949">S-adenosyl-L-methionine</keyword>
<keyword id="KW-0808">Transferase</keyword>
<accession>P55137</accession>
<accession>O84747</accession>
<dbReference type="EC" id="2.1.1.-"/>
<dbReference type="EMBL" id="AE001273">
    <property type="protein sequence ID" value="AAC68337.2"/>
    <property type="molecule type" value="Genomic_DNA"/>
</dbReference>
<dbReference type="EMBL" id="M94254">
    <property type="protein sequence ID" value="AAA91052.1"/>
    <property type="molecule type" value="Genomic_DNA"/>
</dbReference>
<dbReference type="PIR" id="H71476">
    <property type="entry name" value="H71476"/>
</dbReference>
<dbReference type="SMR" id="P55137"/>
<dbReference type="FunCoup" id="P55137">
    <property type="interactions" value="294"/>
</dbReference>
<dbReference type="STRING" id="272561.CT_742"/>
<dbReference type="EnsemblBacteria" id="AAC68337">
    <property type="protein sequence ID" value="AAC68337"/>
    <property type="gene ID" value="CT_742"/>
</dbReference>
<dbReference type="KEGG" id="ctr:CT_742"/>
<dbReference type="PATRIC" id="fig|272561.5.peg.816"/>
<dbReference type="HOGENOM" id="CLU_014689_7_2_0"/>
<dbReference type="InParanoid" id="P55137"/>
<dbReference type="OrthoDB" id="9804590at2"/>
<dbReference type="Proteomes" id="UP000000431">
    <property type="component" value="Chromosome"/>
</dbReference>
<dbReference type="GO" id="GO:0051539">
    <property type="term" value="F:4 iron, 4 sulfur cluster binding"/>
    <property type="evidence" value="ECO:0007669"/>
    <property type="project" value="UniProtKB-KW"/>
</dbReference>
<dbReference type="GO" id="GO:0046872">
    <property type="term" value="F:metal ion binding"/>
    <property type="evidence" value="ECO:0007669"/>
    <property type="project" value="UniProtKB-KW"/>
</dbReference>
<dbReference type="GO" id="GO:0070041">
    <property type="term" value="F:rRNA (uridine-C5-)-methyltransferase activity"/>
    <property type="evidence" value="ECO:0000318"/>
    <property type="project" value="GO_Central"/>
</dbReference>
<dbReference type="GO" id="GO:0070475">
    <property type="term" value="P:rRNA base methylation"/>
    <property type="evidence" value="ECO:0000318"/>
    <property type="project" value="GO_Central"/>
</dbReference>
<dbReference type="CDD" id="cd02440">
    <property type="entry name" value="AdoMet_MTases"/>
    <property type="match status" value="1"/>
</dbReference>
<dbReference type="Gene3D" id="2.40.50.1070">
    <property type="match status" value="1"/>
</dbReference>
<dbReference type="Gene3D" id="3.40.50.150">
    <property type="entry name" value="Vaccinia Virus protein VP39"/>
    <property type="match status" value="1"/>
</dbReference>
<dbReference type="InterPro" id="IPR030390">
    <property type="entry name" value="MeTrfase_TrmA_AS"/>
</dbReference>
<dbReference type="InterPro" id="IPR030391">
    <property type="entry name" value="MeTrfase_TrmA_CS"/>
</dbReference>
<dbReference type="InterPro" id="IPR029063">
    <property type="entry name" value="SAM-dependent_MTases_sf"/>
</dbReference>
<dbReference type="InterPro" id="IPR010280">
    <property type="entry name" value="U5_MeTrfase_fam"/>
</dbReference>
<dbReference type="NCBIfam" id="TIGR00479">
    <property type="entry name" value="rumA"/>
    <property type="match status" value="1"/>
</dbReference>
<dbReference type="PANTHER" id="PTHR11061">
    <property type="entry name" value="RNA M5U METHYLTRANSFERASE"/>
    <property type="match status" value="1"/>
</dbReference>
<dbReference type="PANTHER" id="PTHR11061:SF30">
    <property type="entry name" value="TRNA (URACIL(54)-C(5))-METHYLTRANSFERASE"/>
    <property type="match status" value="1"/>
</dbReference>
<dbReference type="Pfam" id="PF05958">
    <property type="entry name" value="tRNA_U5-meth_tr"/>
    <property type="match status" value="1"/>
</dbReference>
<dbReference type="SUPFAM" id="SSF53335">
    <property type="entry name" value="S-adenosyl-L-methionine-dependent methyltransferases"/>
    <property type="match status" value="1"/>
</dbReference>
<dbReference type="PROSITE" id="PS51687">
    <property type="entry name" value="SAM_MT_RNA_M5U"/>
    <property type="match status" value="1"/>
</dbReference>
<dbReference type="PROSITE" id="PS01230">
    <property type="entry name" value="TRMA_1"/>
    <property type="match status" value="1"/>
</dbReference>
<dbReference type="PROSITE" id="PS01231">
    <property type="entry name" value="TRMA_2"/>
    <property type="match status" value="1"/>
</dbReference>